<organism>
    <name type="scientific">Mycobacterium sp. (strain MCS)</name>
    <dbReference type="NCBI Taxonomy" id="164756"/>
    <lineage>
        <taxon>Bacteria</taxon>
        <taxon>Bacillati</taxon>
        <taxon>Actinomycetota</taxon>
        <taxon>Actinomycetes</taxon>
        <taxon>Mycobacteriales</taxon>
        <taxon>Mycobacteriaceae</taxon>
        <taxon>Mycobacterium</taxon>
    </lineage>
</organism>
<proteinExistence type="inferred from homology"/>
<protein>
    <recommendedName>
        <fullName evidence="1">4-hydroxy-tetrahydrodipicolinate reductase</fullName>
        <shortName evidence="1">HTPA reductase</shortName>
        <ecNumber evidence="1">1.17.1.8</ecNumber>
    </recommendedName>
</protein>
<name>DAPB_MYCSS</name>
<comment type="function">
    <text evidence="1">Catalyzes the conversion of 4-hydroxy-tetrahydrodipicolinate (HTPA) to tetrahydrodipicolinate.</text>
</comment>
<comment type="catalytic activity">
    <reaction evidence="1">
        <text>(S)-2,3,4,5-tetrahydrodipicolinate + NAD(+) + H2O = (2S,4S)-4-hydroxy-2,3,4,5-tetrahydrodipicolinate + NADH + H(+)</text>
        <dbReference type="Rhea" id="RHEA:35323"/>
        <dbReference type="ChEBI" id="CHEBI:15377"/>
        <dbReference type="ChEBI" id="CHEBI:15378"/>
        <dbReference type="ChEBI" id="CHEBI:16845"/>
        <dbReference type="ChEBI" id="CHEBI:57540"/>
        <dbReference type="ChEBI" id="CHEBI:57945"/>
        <dbReference type="ChEBI" id="CHEBI:67139"/>
        <dbReference type="EC" id="1.17.1.8"/>
    </reaction>
</comment>
<comment type="catalytic activity">
    <reaction evidence="1">
        <text>(S)-2,3,4,5-tetrahydrodipicolinate + NADP(+) + H2O = (2S,4S)-4-hydroxy-2,3,4,5-tetrahydrodipicolinate + NADPH + H(+)</text>
        <dbReference type="Rhea" id="RHEA:35331"/>
        <dbReference type="ChEBI" id="CHEBI:15377"/>
        <dbReference type="ChEBI" id="CHEBI:15378"/>
        <dbReference type="ChEBI" id="CHEBI:16845"/>
        <dbReference type="ChEBI" id="CHEBI:57783"/>
        <dbReference type="ChEBI" id="CHEBI:58349"/>
        <dbReference type="ChEBI" id="CHEBI:67139"/>
        <dbReference type="EC" id="1.17.1.8"/>
    </reaction>
</comment>
<comment type="pathway">
    <text evidence="1">Amino-acid biosynthesis; L-lysine biosynthesis via DAP pathway; (S)-tetrahydrodipicolinate from L-aspartate: step 4/4.</text>
</comment>
<comment type="subcellular location">
    <subcellularLocation>
        <location evidence="1">Cytoplasm</location>
    </subcellularLocation>
</comment>
<comment type="similarity">
    <text evidence="1">Belongs to the DapB family.</text>
</comment>
<comment type="caution">
    <text evidence="2">Was originally thought to be a dihydrodipicolinate reductase (DHDPR), catalyzing the conversion of dihydrodipicolinate to tetrahydrodipicolinate. However, it was shown in E.coli that the substrate of the enzymatic reaction is not dihydrodipicolinate (DHDP) but in fact (2S,4S)-4-hydroxy-2,3,4,5-tetrahydrodipicolinic acid (HTPA), the product released by the DapA-catalyzed reaction.</text>
</comment>
<sequence>MRVGVLGAKGKVGATMVQAVEAADDLTFTTGVDAGDPLSALVDTRTDVVIDFTHPSVVMDNLKFLIDNGIHAVVGTTGFTDERISQVQDWLADKPESAVLIAPNFAIGAVLSMHFAQQAARFFESVEVIELHHPHKADAPSGTAARTAKLIAAARKDMPPNPDATSTGLEGARGADVDGIPVHSIRLAGLVAHQEVLFGTQGETLTIRHDSLDRTSFVPGVLLAVRKVSERPGLTVGIEPLLDLT</sequence>
<feature type="chain" id="PRO_1000008600" description="4-hydroxy-tetrahydrodipicolinate reductase">
    <location>
        <begin position="1"/>
        <end position="245"/>
    </location>
</feature>
<feature type="active site" description="Proton donor/acceptor" evidence="1">
    <location>
        <position position="132"/>
    </location>
</feature>
<feature type="active site" description="Proton donor" evidence="1">
    <location>
        <position position="136"/>
    </location>
</feature>
<feature type="binding site" evidence="1">
    <location>
        <begin position="7"/>
        <end position="12"/>
    </location>
    <ligand>
        <name>NAD(+)</name>
        <dbReference type="ChEBI" id="CHEBI:57540"/>
    </ligand>
</feature>
<feature type="binding site" evidence="1">
    <location>
        <begin position="75"/>
        <end position="77"/>
    </location>
    <ligand>
        <name>NAD(+)</name>
        <dbReference type="ChEBI" id="CHEBI:57540"/>
    </ligand>
</feature>
<feature type="binding site" evidence="1">
    <location>
        <begin position="102"/>
        <end position="105"/>
    </location>
    <ligand>
        <name>NAD(+)</name>
        <dbReference type="ChEBI" id="CHEBI:57540"/>
    </ligand>
</feature>
<feature type="binding site" evidence="1">
    <location>
        <position position="133"/>
    </location>
    <ligand>
        <name>(S)-2,3,4,5-tetrahydrodipicolinate</name>
        <dbReference type="ChEBI" id="CHEBI:16845"/>
    </ligand>
</feature>
<feature type="binding site" evidence="1">
    <location>
        <begin position="142"/>
        <end position="143"/>
    </location>
    <ligand>
        <name>(S)-2,3,4,5-tetrahydrodipicolinate</name>
        <dbReference type="ChEBI" id="CHEBI:16845"/>
    </ligand>
</feature>
<gene>
    <name evidence="1" type="primary">dapB</name>
    <name type="ordered locus">Mmcs_2107</name>
</gene>
<evidence type="ECO:0000255" key="1">
    <source>
        <dbReference type="HAMAP-Rule" id="MF_00102"/>
    </source>
</evidence>
<evidence type="ECO:0000305" key="2"/>
<keyword id="KW-0028">Amino-acid biosynthesis</keyword>
<keyword id="KW-0963">Cytoplasm</keyword>
<keyword id="KW-0220">Diaminopimelate biosynthesis</keyword>
<keyword id="KW-0457">Lysine biosynthesis</keyword>
<keyword id="KW-0520">NAD</keyword>
<keyword id="KW-0521">NADP</keyword>
<keyword id="KW-0560">Oxidoreductase</keyword>
<accession>Q1BA69</accession>
<dbReference type="EC" id="1.17.1.8" evidence="1"/>
<dbReference type="EMBL" id="CP000384">
    <property type="protein sequence ID" value="ABG08215.1"/>
    <property type="molecule type" value="Genomic_DNA"/>
</dbReference>
<dbReference type="SMR" id="Q1BA69"/>
<dbReference type="KEGG" id="mmc:Mmcs_2107"/>
<dbReference type="HOGENOM" id="CLU_047479_0_1_11"/>
<dbReference type="BioCyc" id="MSP164756:G1G6O-2153-MONOMER"/>
<dbReference type="UniPathway" id="UPA00034">
    <property type="reaction ID" value="UER00018"/>
</dbReference>
<dbReference type="GO" id="GO:0005829">
    <property type="term" value="C:cytosol"/>
    <property type="evidence" value="ECO:0007669"/>
    <property type="project" value="TreeGrafter"/>
</dbReference>
<dbReference type="GO" id="GO:0008839">
    <property type="term" value="F:4-hydroxy-tetrahydrodipicolinate reductase"/>
    <property type="evidence" value="ECO:0007669"/>
    <property type="project" value="UniProtKB-EC"/>
</dbReference>
<dbReference type="GO" id="GO:0051287">
    <property type="term" value="F:NAD binding"/>
    <property type="evidence" value="ECO:0007669"/>
    <property type="project" value="UniProtKB-UniRule"/>
</dbReference>
<dbReference type="GO" id="GO:0050661">
    <property type="term" value="F:NADP binding"/>
    <property type="evidence" value="ECO:0007669"/>
    <property type="project" value="UniProtKB-UniRule"/>
</dbReference>
<dbReference type="GO" id="GO:0016726">
    <property type="term" value="F:oxidoreductase activity, acting on CH or CH2 groups, NAD or NADP as acceptor"/>
    <property type="evidence" value="ECO:0007669"/>
    <property type="project" value="UniProtKB-UniRule"/>
</dbReference>
<dbReference type="GO" id="GO:0019877">
    <property type="term" value="P:diaminopimelate biosynthetic process"/>
    <property type="evidence" value="ECO:0007669"/>
    <property type="project" value="UniProtKB-UniRule"/>
</dbReference>
<dbReference type="GO" id="GO:0009089">
    <property type="term" value="P:lysine biosynthetic process via diaminopimelate"/>
    <property type="evidence" value="ECO:0007669"/>
    <property type="project" value="UniProtKB-UniRule"/>
</dbReference>
<dbReference type="CDD" id="cd02274">
    <property type="entry name" value="DHDPR_N"/>
    <property type="match status" value="1"/>
</dbReference>
<dbReference type="FunFam" id="3.30.360.10:FF:000009">
    <property type="entry name" value="4-hydroxy-tetrahydrodipicolinate reductase"/>
    <property type="match status" value="1"/>
</dbReference>
<dbReference type="Gene3D" id="3.30.360.10">
    <property type="entry name" value="Dihydrodipicolinate Reductase, domain 2"/>
    <property type="match status" value="1"/>
</dbReference>
<dbReference type="Gene3D" id="3.40.50.720">
    <property type="entry name" value="NAD(P)-binding Rossmann-like Domain"/>
    <property type="match status" value="1"/>
</dbReference>
<dbReference type="HAMAP" id="MF_00102">
    <property type="entry name" value="DapB"/>
    <property type="match status" value="1"/>
</dbReference>
<dbReference type="InterPro" id="IPR022663">
    <property type="entry name" value="DapB_C"/>
</dbReference>
<dbReference type="InterPro" id="IPR000846">
    <property type="entry name" value="DapB_N"/>
</dbReference>
<dbReference type="InterPro" id="IPR022664">
    <property type="entry name" value="DapB_N_CS"/>
</dbReference>
<dbReference type="InterPro" id="IPR023940">
    <property type="entry name" value="DHDPR_bac"/>
</dbReference>
<dbReference type="InterPro" id="IPR036291">
    <property type="entry name" value="NAD(P)-bd_dom_sf"/>
</dbReference>
<dbReference type="NCBIfam" id="TIGR00036">
    <property type="entry name" value="dapB"/>
    <property type="match status" value="1"/>
</dbReference>
<dbReference type="PANTHER" id="PTHR20836:SF0">
    <property type="entry name" value="4-HYDROXY-TETRAHYDRODIPICOLINATE REDUCTASE 1, CHLOROPLASTIC-RELATED"/>
    <property type="match status" value="1"/>
</dbReference>
<dbReference type="PANTHER" id="PTHR20836">
    <property type="entry name" value="DIHYDRODIPICOLINATE REDUCTASE"/>
    <property type="match status" value="1"/>
</dbReference>
<dbReference type="Pfam" id="PF05173">
    <property type="entry name" value="DapB_C"/>
    <property type="match status" value="1"/>
</dbReference>
<dbReference type="Pfam" id="PF01113">
    <property type="entry name" value="DapB_N"/>
    <property type="match status" value="1"/>
</dbReference>
<dbReference type="PIRSF" id="PIRSF000161">
    <property type="entry name" value="DHPR"/>
    <property type="match status" value="1"/>
</dbReference>
<dbReference type="SUPFAM" id="SSF55347">
    <property type="entry name" value="Glyceraldehyde-3-phosphate dehydrogenase-like, C-terminal domain"/>
    <property type="match status" value="1"/>
</dbReference>
<dbReference type="SUPFAM" id="SSF51735">
    <property type="entry name" value="NAD(P)-binding Rossmann-fold domains"/>
    <property type="match status" value="1"/>
</dbReference>
<dbReference type="PROSITE" id="PS01298">
    <property type="entry name" value="DAPB"/>
    <property type="match status" value="1"/>
</dbReference>
<reference key="1">
    <citation type="submission" date="2006-06" db="EMBL/GenBank/DDBJ databases">
        <title>Complete sequence of chromosome of Mycobacterium sp. MCS.</title>
        <authorList>
            <consortium name="US DOE Joint Genome Institute"/>
            <person name="Copeland A."/>
            <person name="Lucas S."/>
            <person name="Lapidus A."/>
            <person name="Barry K."/>
            <person name="Detter J.C."/>
            <person name="Glavina del Rio T."/>
            <person name="Hammon N."/>
            <person name="Israni S."/>
            <person name="Dalin E."/>
            <person name="Tice H."/>
            <person name="Pitluck S."/>
            <person name="Martinez M."/>
            <person name="Schmutz J."/>
            <person name="Larimer F."/>
            <person name="Land M."/>
            <person name="Hauser L."/>
            <person name="Kyrpides N."/>
            <person name="Kim E."/>
            <person name="Miller C.D."/>
            <person name="Hughes J.E."/>
            <person name="Anderson A.J."/>
            <person name="Sims R.C."/>
            <person name="Richardson P."/>
        </authorList>
    </citation>
    <scope>NUCLEOTIDE SEQUENCE [LARGE SCALE GENOMIC DNA]</scope>
    <source>
        <strain>MCS</strain>
    </source>
</reference>